<accession>P43680</accession>
<accession>Q3UND6</accession>
<accession>Q9EQ73</accession>
<keyword id="KW-0002">3D-structure</keyword>
<keyword id="KW-0010">Activator</keyword>
<keyword id="KW-0238">DNA-binding</keyword>
<keyword id="KW-0539">Nucleus</keyword>
<keyword id="KW-1185">Reference proteome</keyword>
<keyword id="KW-0804">Transcription</keyword>
<keyword id="KW-0805">Transcription regulation</keyword>
<feature type="chain" id="PRO_0000048768" description="Transcription factor SOX-18">
    <location>
        <begin position="1"/>
        <end position="377"/>
    </location>
</feature>
<feature type="domain" description="Sox C-terminal" evidence="3">
    <location>
        <begin position="256"/>
        <end position="376"/>
    </location>
</feature>
<feature type="DNA-binding region" description="HMG box" evidence="2 12">
    <location>
        <begin position="79"/>
        <end position="147"/>
    </location>
</feature>
<feature type="region of interest" description="Disordered" evidence="4">
    <location>
        <begin position="1"/>
        <end position="76"/>
    </location>
</feature>
<feature type="region of interest" description="Interaction with DNA" evidence="12">
    <location>
        <begin position="81"/>
        <end position="94"/>
    </location>
</feature>
<feature type="region of interest" description="Interaction with DNA" evidence="12">
    <location>
        <begin position="105"/>
        <end position="117"/>
    </location>
</feature>
<feature type="region of interest" description="Important for transcriptional activation" evidence="5 13">
    <location>
        <begin position="160"/>
        <end position="225"/>
    </location>
</feature>
<feature type="short sequence motif" description="9aaTAD" evidence="1">
    <location>
        <begin position="318"/>
        <end position="326"/>
    </location>
</feature>
<feature type="compositionally biased region" description="Low complexity" evidence="4">
    <location>
        <begin position="21"/>
        <end position="34"/>
    </location>
</feature>
<feature type="compositionally biased region" description="Low complexity" evidence="4">
    <location>
        <begin position="41"/>
        <end position="52"/>
    </location>
</feature>
<feature type="sequence conflict" description="In Ref. 4; BAE25811." evidence="15" ref="4">
    <original>P</original>
    <variation>Q</variation>
    <location>
        <position position="14"/>
    </location>
</feature>
<feature type="sequence conflict" description="In Ref. 1; AAB18615." evidence="15" ref="1">
    <original>A</original>
    <variation>E</variation>
    <location>
        <position position="156"/>
    </location>
</feature>
<feature type="sequence conflict" description="In Ref. 1; AAB18615." evidence="15" ref="1">
    <original>A</original>
    <variation>G</variation>
    <location>
        <position position="260"/>
    </location>
</feature>
<feature type="helix" evidence="18">
    <location>
        <begin position="85"/>
        <end position="100"/>
    </location>
</feature>
<feature type="helix" evidence="18">
    <location>
        <begin position="106"/>
        <end position="119"/>
    </location>
</feature>
<feature type="helix" evidence="18">
    <location>
        <begin position="122"/>
        <end position="142"/>
    </location>
</feature>
<evidence type="ECO:0000250" key="1">
    <source>
        <dbReference type="UniProtKB" id="P35713"/>
    </source>
</evidence>
<evidence type="ECO:0000255" key="2">
    <source>
        <dbReference type="PROSITE-ProRule" id="PRU00267"/>
    </source>
</evidence>
<evidence type="ECO:0000255" key="3">
    <source>
        <dbReference type="PROSITE-ProRule" id="PRU00849"/>
    </source>
</evidence>
<evidence type="ECO:0000256" key="4">
    <source>
        <dbReference type="SAM" id="MobiDB-lite"/>
    </source>
</evidence>
<evidence type="ECO:0000269" key="5">
    <source>
    </source>
</evidence>
<evidence type="ECO:0000269" key="6">
    <source>
    </source>
</evidence>
<evidence type="ECO:0000269" key="7">
    <source>
    </source>
</evidence>
<evidence type="ECO:0000269" key="8">
    <source>
    </source>
</evidence>
<evidence type="ECO:0000269" key="9">
    <source>
    </source>
</evidence>
<evidence type="ECO:0000269" key="10">
    <source>
    </source>
</evidence>
<evidence type="ECO:0000269" key="11">
    <source>
    </source>
</evidence>
<evidence type="ECO:0000269" key="12">
    <source>
    </source>
</evidence>
<evidence type="ECO:0000269" key="13">
    <source>
    </source>
</evidence>
<evidence type="ECO:0000269" key="14">
    <source>
    </source>
</evidence>
<evidence type="ECO:0000305" key="15"/>
<evidence type="ECO:0000312" key="16">
    <source>
        <dbReference type="EMBL" id="BAE25811.1"/>
    </source>
</evidence>
<evidence type="ECO:0007744" key="17">
    <source>
        <dbReference type="PDB" id="4Y60"/>
    </source>
</evidence>
<evidence type="ECO:0007829" key="18">
    <source>
        <dbReference type="PDB" id="4Y60"/>
    </source>
</evidence>
<reference key="1">
    <citation type="journal article" date="1995" name="Gene">
        <title>Sequence and expression of Sox-18 encoding a new HMG-box transcription factor.</title>
        <authorList>
            <person name="Dunn T.L."/>
            <person name="Mynett-Johnson L."/>
            <person name="Wright E.M."/>
            <person name="Hosking B.M."/>
            <person name="Koopman P.A."/>
            <person name="Muscat G.E.O."/>
        </authorList>
    </citation>
    <scope>NUCLEOTIDE SEQUENCE [MRNA]</scope>
    <scope>TISSUE SPECIFICITY</scope>
    <source>
        <strain>BALB/cJ</strain>
        <tissue>Heart muscle</tissue>
    </source>
</reference>
<reference key="2">
    <citation type="submission" date="1996-11" db="EMBL/GenBank/DDBJ databases">
        <authorList>
            <person name="Dunn T.L."/>
        </authorList>
    </citation>
    <scope>SEQUENCE REVISION</scope>
</reference>
<reference key="3">
    <citation type="journal article" date="2000" name="Mamm. Genome">
        <title>Structure, mapping, and expression of human SOX18.</title>
        <authorList>
            <person name="Pennisi D.J."/>
            <person name="James K.M."/>
            <person name="Hosking B.M."/>
            <person name="Muscat G.E."/>
            <person name="Koopman P."/>
        </authorList>
    </citation>
    <scope>NUCLEOTIDE SEQUENCE [GENOMIC DNA]</scope>
</reference>
<reference key="4">
    <citation type="journal article" date="2005" name="Science">
        <title>The transcriptional landscape of the mammalian genome.</title>
        <authorList>
            <person name="Carninci P."/>
            <person name="Kasukawa T."/>
            <person name="Katayama S."/>
            <person name="Gough J."/>
            <person name="Frith M.C."/>
            <person name="Maeda N."/>
            <person name="Oyama R."/>
            <person name="Ravasi T."/>
            <person name="Lenhard B."/>
            <person name="Wells C."/>
            <person name="Kodzius R."/>
            <person name="Shimokawa K."/>
            <person name="Bajic V.B."/>
            <person name="Brenner S.E."/>
            <person name="Batalov S."/>
            <person name="Forrest A.R."/>
            <person name="Zavolan M."/>
            <person name="Davis M.J."/>
            <person name="Wilming L.G."/>
            <person name="Aidinis V."/>
            <person name="Allen J.E."/>
            <person name="Ambesi-Impiombato A."/>
            <person name="Apweiler R."/>
            <person name="Aturaliya R.N."/>
            <person name="Bailey T.L."/>
            <person name="Bansal M."/>
            <person name="Baxter L."/>
            <person name="Beisel K.W."/>
            <person name="Bersano T."/>
            <person name="Bono H."/>
            <person name="Chalk A.M."/>
            <person name="Chiu K.P."/>
            <person name="Choudhary V."/>
            <person name="Christoffels A."/>
            <person name="Clutterbuck D.R."/>
            <person name="Crowe M.L."/>
            <person name="Dalla E."/>
            <person name="Dalrymple B.P."/>
            <person name="de Bono B."/>
            <person name="Della Gatta G."/>
            <person name="di Bernardo D."/>
            <person name="Down T."/>
            <person name="Engstrom P."/>
            <person name="Fagiolini M."/>
            <person name="Faulkner G."/>
            <person name="Fletcher C.F."/>
            <person name="Fukushima T."/>
            <person name="Furuno M."/>
            <person name="Futaki S."/>
            <person name="Gariboldi M."/>
            <person name="Georgii-Hemming P."/>
            <person name="Gingeras T.R."/>
            <person name="Gojobori T."/>
            <person name="Green R.E."/>
            <person name="Gustincich S."/>
            <person name="Harbers M."/>
            <person name="Hayashi Y."/>
            <person name="Hensch T.K."/>
            <person name="Hirokawa N."/>
            <person name="Hill D."/>
            <person name="Huminiecki L."/>
            <person name="Iacono M."/>
            <person name="Ikeo K."/>
            <person name="Iwama A."/>
            <person name="Ishikawa T."/>
            <person name="Jakt M."/>
            <person name="Kanapin A."/>
            <person name="Katoh M."/>
            <person name="Kawasawa Y."/>
            <person name="Kelso J."/>
            <person name="Kitamura H."/>
            <person name="Kitano H."/>
            <person name="Kollias G."/>
            <person name="Krishnan S.P."/>
            <person name="Kruger A."/>
            <person name="Kummerfeld S.K."/>
            <person name="Kurochkin I.V."/>
            <person name="Lareau L.F."/>
            <person name="Lazarevic D."/>
            <person name="Lipovich L."/>
            <person name="Liu J."/>
            <person name="Liuni S."/>
            <person name="McWilliam S."/>
            <person name="Madan Babu M."/>
            <person name="Madera M."/>
            <person name="Marchionni L."/>
            <person name="Matsuda H."/>
            <person name="Matsuzawa S."/>
            <person name="Miki H."/>
            <person name="Mignone F."/>
            <person name="Miyake S."/>
            <person name="Morris K."/>
            <person name="Mottagui-Tabar S."/>
            <person name="Mulder N."/>
            <person name="Nakano N."/>
            <person name="Nakauchi H."/>
            <person name="Ng P."/>
            <person name="Nilsson R."/>
            <person name="Nishiguchi S."/>
            <person name="Nishikawa S."/>
            <person name="Nori F."/>
            <person name="Ohara O."/>
            <person name="Okazaki Y."/>
            <person name="Orlando V."/>
            <person name="Pang K.C."/>
            <person name="Pavan W.J."/>
            <person name="Pavesi G."/>
            <person name="Pesole G."/>
            <person name="Petrovsky N."/>
            <person name="Piazza S."/>
            <person name="Reed J."/>
            <person name="Reid J.F."/>
            <person name="Ring B.Z."/>
            <person name="Ringwald M."/>
            <person name="Rost B."/>
            <person name="Ruan Y."/>
            <person name="Salzberg S.L."/>
            <person name="Sandelin A."/>
            <person name="Schneider C."/>
            <person name="Schoenbach C."/>
            <person name="Sekiguchi K."/>
            <person name="Semple C.A."/>
            <person name="Seno S."/>
            <person name="Sessa L."/>
            <person name="Sheng Y."/>
            <person name="Shibata Y."/>
            <person name="Shimada H."/>
            <person name="Shimada K."/>
            <person name="Silva D."/>
            <person name="Sinclair B."/>
            <person name="Sperling S."/>
            <person name="Stupka E."/>
            <person name="Sugiura K."/>
            <person name="Sultana R."/>
            <person name="Takenaka Y."/>
            <person name="Taki K."/>
            <person name="Tammoja K."/>
            <person name="Tan S.L."/>
            <person name="Tang S."/>
            <person name="Taylor M.S."/>
            <person name="Tegner J."/>
            <person name="Teichmann S.A."/>
            <person name="Ueda H.R."/>
            <person name="van Nimwegen E."/>
            <person name="Verardo R."/>
            <person name="Wei C.L."/>
            <person name="Yagi K."/>
            <person name="Yamanishi H."/>
            <person name="Zabarovsky E."/>
            <person name="Zhu S."/>
            <person name="Zimmer A."/>
            <person name="Hide W."/>
            <person name="Bult C."/>
            <person name="Grimmond S.M."/>
            <person name="Teasdale R.D."/>
            <person name="Liu E.T."/>
            <person name="Brusic V."/>
            <person name="Quackenbush J."/>
            <person name="Wahlestedt C."/>
            <person name="Mattick J.S."/>
            <person name="Hume D.A."/>
            <person name="Kai C."/>
            <person name="Sasaki D."/>
            <person name="Tomaru Y."/>
            <person name="Fukuda S."/>
            <person name="Kanamori-Katayama M."/>
            <person name="Suzuki M."/>
            <person name="Aoki J."/>
            <person name="Arakawa T."/>
            <person name="Iida J."/>
            <person name="Imamura K."/>
            <person name="Itoh M."/>
            <person name="Kato T."/>
            <person name="Kawaji H."/>
            <person name="Kawagashira N."/>
            <person name="Kawashima T."/>
            <person name="Kojima M."/>
            <person name="Kondo S."/>
            <person name="Konno H."/>
            <person name="Nakano K."/>
            <person name="Ninomiya N."/>
            <person name="Nishio T."/>
            <person name="Okada M."/>
            <person name="Plessy C."/>
            <person name="Shibata K."/>
            <person name="Shiraki T."/>
            <person name="Suzuki S."/>
            <person name="Tagami M."/>
            <person name="Waki K."/>
            <person name="Watahiki A."/>
            <person name="Okamura-Oho Y."/>
            <person name="Suzuki H."/>
            <person name="Kawai J."/>
            <person name="Hayashizaki Y."/>
        </authorList>
    </citation>
    <scope>NUCLEOTIDE SEQUENCE [LARGE SCALE MRNA]</scope>
    <source>
        <strain evidence="16">C57BL/6J</strain>
        <tissue evidence="16">Lung</tissue>
    </source>
</reference>
<reference key="5">
    <citation type="journal article" date="2004" name="Genome Res.">
        <title>The status, quality, and expansion of the NIH full-length cDNA project: the Mammalian Gene Collection (MGC).</title>
        <authorList>
            <consortium name="The MGC Project Team"/>
        </authorList>
    </citation>
    <scope>NUCLEOTIDE SEQUENCE [LARGE SCALE MRNA]</scope>
</reference>
<reference key="6">
    <citation type="submission" date="1994-02" db="EMBL/GenBank/DDBJ databases">
        <authorList>
            <person name="Layfield R."/>
            <person name="Mynett-Johnson L."/>
            <person name="Yarwood P.J."/>
            <person name="Muscat G.E.O."/>
            <person name="Koopman P.A."/>
            <person name="Hume D.A."/>
        </authorList>
    </citation>
    <scope>NUCLEOTIDE SEQUENCE OF 83-142</scope>
    <source>
        <strain>BALB/cJ</strain>
        <tissue>Heart muscle</tissue>
    </source>
</reference>
<reference key="7">
    <citation type="journal article" date="1995" name="Nucleic Acids Res.">
        <title>Trans-activation and DNA-binding properties of the transcription factor, Sox-18.</title>
        <authorList>
            <person name="Hosking B.M."/>
            <person name="Muscat G.E.O."/>
            <person name="Koopman P.A."/>
            <person name="Dowhan D.H."/>
            <person name="Dunn T.L."/>
        </authorList>
    </citation>
    <scope>FUNCTION</scope>
</reference>
<reference key="8">
    <citation type="journal article" date="2000" name="Mol. Cell. Biol.">
        <title>Mice null for sox18 are viable and display a mild coat defect.</title>
        <authorList>
            <person name="Pennisi D."/>
            <person name="Bowles J."/>
            <person name="Nagy A."/>
            <person name="Muscat G."/>
            <person name="Koopman P."/>
        </authorList>
    </citation>
    <scope>FUNCTION</scope>
    <scope>MISCELLANEOUS</scope>
</reference>
<reference key="9">
    <citation type="journal article" date="2000" name="Nat. Genet.">
        <title>Mutations in Sox18 underlie cardiovascular and hair follicle defects in ragged mice.</title>
        <authorList>
            <person name="Pennisi D."/>
            <person name="Gardner J."/>
            <person name="Chambers D."/>
            <person name="Hosking B."/>
            <person name="Peters J."/>
            <person name="Muscat G."/>
            <person name="Abbott C."/>
            <person name="Koopman P."/>
        </authorList>
    </citation>
    <scope>FUNCTION</scope>
    <scope>DISEASE</scope>
    <scope>DEVELOPMENTAL STAGE</scope>
</reference>
<reference key="10">
    <citation type="journal article" date="2001" name="Biochem. Biophys. Res. Commun.">
        <title>SOX18 directly interacts with MEF2C in endothelial cells.</title>
        <authorList>
            <person name="Hosking B.M."/>
            <person name="Wang S.C."/>
            <person name="Chen S.L."/>
            <person name="Penning S."/>
            <person name="Koopman P."/>
            <person name="Muscat G.E."/>
        </authorList>
    </citation>
    <scope>FUNCTION</scope>
    <scope>INTERACTION WITH MEF2C</scope>
    <scope>SUBCELLULAR LOCATION</scope>
</reference>
<reference key="11">
    <citation type="journal article" date="2003" name="Genesis">
        <title>Sox18 mutations in the ragged mouse alleles ragged-like and opossum.</title>
        <authorList>
            <person name="James K."/>
            <person name="Hosking B."/>
            <person name="Gardner J."/>
            <person name="Muscat G.E."/>
            <person name="Koopman P."/>
        </authorList>
    </citation>
    <scope>FUNCTION</scope>
    <scope>DISEASE</scope>
    <scope>INTERACTION WITH MEF2C</scope>
</reference>
<reference key="12">
    <citation type="journal article" date="2006" name="J. Cell Sci.">
        <title>Redundant roles of Sox17 and Sox18 in postnatal angiogenesis in mice.</title>
        <authorList>
            <person name="Matsui T."/>
            <person name="Kanai-Azuma M."/>
            <person name="Hara K."/>
            <person name="Matoba S."/>
            <person name="Hiramatsu R."/>
            <person name="Kawakami H."/>
            <person name="Kurohmaru M."/>
            <person name="Koopman P."/>
            <person name="Kanai Y."/>
        </authorList>
    </citation>
    <scope>FUNCTION</scope>
</reference>
<reference key="13">
    <citation type="journal article" date="2008" name="Nature">
        <title>Sox18 induces development of the lymphatic vasculature in mice.</title>
        <authorList>
            <person name="Francois M."/>
            <person name="Caprini A."/>
            <person name="Hosking B."/>
            <person name="Orsenigo F."/>
            <person name="Wilhelm D."/>
            <person name="Browne C."/>
            <person name="Paavonen K."/>
            <person name="Karnezis T."/>
            <person name="Shayan R."/>
            <person name="Downes M."/>
            <person name="Davidson T."/>
            <person name="Tutt D."/>
            <person name="Cheah K.S."/>
            <person name="Stacker S.A."/>
            <person name="Muscat G.E."/>
            <person name="Achen M.G."/>
            <person name="Dejana E."/>
            <person name="Koopman P."/>
        </authorList>
    </citation>
    <scope>FUNCTION</scope>
    <scope>DISEASE</scope>
    <scope>DEVELOPMENTAL STAGE</scope>
    <scope>MISCELLANEOUS</scope>
</reference>
<reference key="14">
    <citation type="journal article" date="2009" name="Hum. Mol. Genet.">
        <title>Vascular defects in a mouse model of hypotrichosis-lymphedema-telangiectasia syndrome indicate a role for SOX18 in blood vessel maturation.</title>
        <authorList>
            <person name="Downes M."/>
            <person name="Francois M."/>
            <person name="Ferguson C."/>
            <person name="Parton R.G."/>
            <person name="Koopman P."/>
        </authorList>
    </citation>
    <scope>FUNCTION</scope>
    <scope>DISEASE</scope>
</reference>
<reference evidence="17" key="15">
    <citation type="journal article" date="2016" name="Nucleic Acids Res.">
        <title>Structure and decoy-mediated inhibition of the SOX18/Prox1-DNA interaction.</title>
        <authorList>
            <person name="Klaus M."/>
            <person name="Prokoph N."/>
            <person name="Girbig M."/>
            <person name="Wang X."/>
            <person name="Huang Y.H."/>
            <person name="Srivastava Y."/>
            <person name="Hou L."/>
            <person name="Narasimhan K."/>
            <person name="Kolatkar P.R."/>
            <person name="Francois M."/>
            <person name="Jauch R."/>
        </authorList>
    </citation>
    <scope>X-RAY CRYSTALLOGRAPHY (1.75 ANGSTROMS) OF 77-155 IN COMPLEX WITH DNA</scope>
    <scope>FUNCTION</scope>
    <scope>DOMAIN</scope>
</reference>
<gene>
    <name type="primary">Sox18</name>
    <name type="synonym">Sox-18</name>
</gene>
<comment type="function">
    <text evidence="5 6 7 8 9 10 11 12 13">Transcriptional activator that binds to the consensus sequence 5'-AACAAAG-3' in the promoter of target genes and plays an essential role in embryonic cardiovascular development and lymphangiogenesis (PubMed:10742113, PubMed:12748961, PubMed:18931657, PubMed:19429912, PubMed:26939885, PubMed:7651823). Activates transcription of PROX1 and other genes coding for lymphatic endothelial markers (PubMed:18931657, PubMed:26939885). Plays an essential role in triggering the differentiation of lymph vessels, but is not required for the maintenance of differentiated lymphatic endothelial cells (PubMed:18931657). Plays an important role in postnatal angiogenesis, where it is functionally redundant with SOX17 (PubMed:16895970). Interaction with MEF2C enhances transcriptional activation (PubMed:11554755). Besides, required for normal hair development (PubMed:11094083, PubMed:12748961).</text>
</comment>
<comment type="subunit">
    <text evidence="7 8">Interacts (via C-terminus) with MEF2C (via MADS box).</text>
</comment>
<comment type="subcellular location">
    <subcellularLocation>
        <location evidence="2 7">Nucleus</location>
    </subcellularLocation>
</comment>
<comment type="tissue specificity">
    <text evidence="14">Detected in adult lung, heart and skeletal muscles.</text>
</comment>
<comment type="developmental stage">
    <text evidence="5 10">Detected at 7.5 and 8.0 dpc in the allantois and blood islands of the yolk sac, and in cells fated to become the endocardium. At 8.5 dpc, detected in the allantois and the nascent vasculature of the yolk sac, the paired dorsal aortae and heart (PubMed:10742113). At 9.5 to 11.0 dpc, detected in endothelial cells of the paired dorsal aortae, in intersomitic vessels and in a network of smaller vessels in head and trunc mesenchyme, and in endothelial cells lining the dorsolateral sector of the cardinal vein (PubMed:10742113, PubMed:18931657). At 10.5 dpc, detected inprecursors of the lymphatic vasculature (PubMed:18931657). At 12.5 dpc, detected in branching vessels and in nascent vibrissae follicles. Detected in vibrissae follicles and pelage follicles at 14.0 dpc (PubMed:10742113). Detected in primary lymph sacs at 13.5 dpc, but is not detected in embryonic or adult lymph vessels (PubMed:18931657).</text>
</comment>
<comment type="domain">
    <text evidence="12">Binds target DNA via the HMG box domain.</text>
</comment>
<comment type="domain">
    <text evidence="1">The 9aaTAD motif is a transactivation domain present in a large number of yeast and animal transcription factors.</text>
</comment>
<comment type="disease">
    <text evidence="5 8 10 11">Defects in this protein are the cause of the ragged, ragged-like and opossum phenotypes (PubMed:10742113, PubMed:12748961, PubMed:18931657, PubMed:19429912). In all these, missense mutations give rise to a truncated protein that retains DNA-binding ability, but lacks regions required for transcription activation (PubMed:10742113, PubMed:12748961). Homozygous ragged and ragged-like mice are almost completely naked, display prenatal edema and frequently die in utero or shortly after birth. Heterozygous ragged and ragged-like mice are mostly viable, but have a thin, ragged coat (PubMed:12748961). Homozygous opossum mice display no visible phenotype up to 11.5 dpc (PubMed:19429912). From 12.5 dpc onwards, mutant embryos display enlarged surface microvasculature and severe subcutaneaous edema, followed by vascular rupture and hemorrhage beginning at 13.5 dpc (PubMed:18931657, PubMed:19429912). All die shortly after 14.5 dpc (PubMed:12748961, PubMed:18931657, PubMed:19429912). Heterozygous opossum mice are almost completely naked, display prenatal edema and frequently die in utero or shortly after birth (PubMed:12748961). Heterozygous opossum mice display defects in development and patterning of the lymph vessels (PubMed:18931657).</text>
</comment>
<comment type="miscellaneous">
    <text evidence="6 9 10">Deletion of the DNA-binding and the C-terminal transcription activation domains causes no visible phenotype, excepting slightly darker coat pigmentation and a decreased proportion of auchene and zigzag hairs (PubMed:11094083). The mild phenotype is due to functional redundancy with other Sox genes (PubMed:11094083, PubMed:16895970). The phenotype apparently depends on the genetic context: backcrossing the mutant into a pure C57BL/6 background leads to defective lymphangiogenesis and the same embryonic lethality as observed for opossum mutants (PubMed:18931657).</text>
</comment>
<organism>
    <name type="scientific">Mus musculus</name>
    <name type="common">Mouse</name>
    <dbReference type="NCBI Taxonomy" id="10090"/>
    <lineage>
        <taxon>Eukaryota</taxon>
        <taxon>Metazoa</taxon>
        <taxon>Chordata</taxon>
        <taxon>Craniata</taxon>
        <taxon>Vertebrata</taxon>
        <taxon>Euteleostomi</taxon>
        <taxon>Mammalia</taxon>
        <taxon>Eutheria</taxon>
        <taxon>Euarchontoglires</taxon>
        <taxon>Glires</taxon>
        <taxon>Rodentia</taxon>
        <taxon>Myomorpha</taxon>
        <taxon>Muroidea</taxon>
        <taxon>Muridae</taxon>
        <taxon>Murinae</taxon>
        <taxon>Mus</taxon>
        <taxon>Mus</taxon>
    </lineage>
</organism>
<sequence length="377" mass="40898">MQRSPPGYGAQDDPPSRRDCAWAPGIGAAAEARGLPVTNVSPTSPASPSSLPRSPPRSPESGRYGFGRGERQTADELRIRRPMNAFMVWAKDERKRLAQQNPDLHNAVLSKMLGKAWKELNTAEKRPFVEEAERLRVQHLRDHPNYKYRPRRKKQARKVRRLEPGLLLPGLVQPSAPPEAFAAASGSARSFRELPTLGAEFDGLGLPTPERSPLDGLEPGEASFFPPPLAPEDCALRAFRAPYAPELARDPSFCYGAPLAEALRTAPPAAPLAGLYYGTLGTPGPFPNPLSPPPESPSLEGTEQLEPTADLWADVDLTEFDQYLNCSRTRPDATTLPYHVALAKLGPRAMSCPEESSLISALSDASSAVYYSACISG</sequence>
<proteinExistence type="evidence at protein level"/>
<dbReference type="EMBL" id="L35032">
    <property type="protein sequence ID" value="AAB18615.1"/>
    <property type="molecule type" value="mRNA"/>
</dbReference>
<dbReference type="EMBL" id="AF288518">
    <property type="protein sequence ID" value="AAG48578.1"/>
    <property type="molecule type" value="Genomic_DNA"/>
</dbReference>
<dbReference type="EMBL" id="AK144281">
    <property type="protein sequence ID" value="BAE25811.1"/>
    <property type="molecule type" value="mRNA"/>
</dbReference>
<dbReference type="EMBL" id="BC006612">
    <property type="protein sequence ID" value="AAH06612.1"/>
    <property type="molecule type" value="mRNA"/>
</dbReference>
<dbReference type="EMBL" id="L29086">
    <property type="protein sequence ID" value="AAA56844.1"/>
    <property type="molecule type" value="mRNA"/>
</dbReference>
<dbReference type="CCDS" id="CCDS17218.1"/>
<dbReference type="RefSeq" id="NP_033262.2">
    <property type="nucleotide sequence ID" value="NM_009236.2"/>
</dbReference>
<dbReference type="PDB" id="4Y60">
    <property type="method" value="X-ray"/>
    <property type="resolution" value="1.75 A"/>
    <property type="chains" value="C=77-155"/>
</dbReference>
<dbReference type="PDBsum" id="4Y60"/>
<dbReference type="SMR" id="P43680"/>
<dbReference type="BioGRID" id="203404">
    <property type="interactions" value="1"/>
</dbReference>
<dbReference type="FunCoup" id="P43680">
    <property type="interactions" value="20"/>
</dbReference>
<dbReference type="STRING" id="10090.ENSMUSP00000062759"/>
<dbReference type="BindingDB" id="P43680"/>
<dbReference type="ChEMBL" id="CHEMBL4523228"/>
<dbReference type="DrugCentral" id="P43680"/>
<dbReference type="GlyGen" id="P43680">
    <property type="glycosylation" value="1 site"/>
</dbReference>
<dbReference type="iPTMnet" id="P43680"/>
<dbReference type="PhosphoSitePlus" id="P43680"/>
<dbReference type="PaxDb" id="10090-ENSMUSP00000062759"/>
<dbReference type="ProteomicsDB" id="261555"/>
<dbReference type="Antibodypedia" id="15501">
    <property type="antibodies" value="184 antibodies from 30 providers"/>
</dbReference>
<dbReference type="DNASU" id="20672"/>
<dbReference type="Ensembl" id="ENSMUST00000054491.6">
    <property type="protein sequence ID" value="ENSMUSP00000062759.6"/>
    <property type="gene ID" value="ENSMUSG00000046470.6"/>
</dbReference>
<dbReference type="GeneID" id="20672"/>
<dbReference type="KEGG" id="mmu:20672"/>
<dbReference type="UCSC" id="uc008ona.1">
    <property type="organism name" value="mouse"/>
</dbReference>
<dbReference type="AGR" id="MGI:103559"/>
<dbReference type="CTD" id="54345"/>
<dbReference type="MGI" id="MGI:103559">
    <property type="gene designation" value="Sox18"/>
</dbReference>
<dbReference type="VEuPathDB" id="HostDB:ENSMUSG00000046470"/>
<dbReference type="eggNOG" id="KOG0527">
    <property type="taxonomic scope" value="Eukaryota"/>
</dbReference>
<dbReference type="GeneTree" id="ENSGT00940000162709"/>
<dbReference type="HOGENOM" id="CLU_044994_1_0_1"/>
<dbReference type="InParanoid" id="P43680"/>
<dbReference type="OMA" id="FSMSHHG"/>
<dbReference type="OrthoDB" id="1919336at2759"/>
<dbReference type="PhylomeDB" id="P43680"/>
<dbReference type="BioGRID-ORCS" id="20672">
    <property type="hits" value="3 hits in 80 CRISPR screens"/>
</dbReference>
<dbReference type="PRO" id="PR:P43680"/>
<dbReference type="Proteomes" id="UP000000589">
    <property type="component" value="Chromosome 2"/>
</dbReference>
<dbReference type="RNAct" id="P43680">
    <property type="molecule type" value="protein"/>
</dbReference>
<dbReference type="Bgee" id="ENSMUSG00000046470">
    <property type="expression patterns" value="Expressed in kidney vasculature and 224 other cell types or tissues"/>
</dbReference>
<dbReference type="GO" id="GO:0000785">
    <property type="term" value="C:chromatin"/>
    <property type="evidence" value="ECO:0007669"/>
    <property type="project" value="Ensembl"/>
</dbReference>
<dbReference type="GO" id="GO:0005634">
    <property type="term" value="C:nucleus"/>
    <property type="evidence" value="ECO:0000314"/>
    <property type="project" value="UniProtKB"/>
</dbReference>
<dbReference type="GO" id="GO:0005667">
    <property type="term" value="C:transcription regulator complex"/>
    <property type="evidence" value="ECO:0000314"/>
    <property type="project" value="MGI"/>
</dbReference>
<dbReference type="GO" id="GO:0003677">
    <property type="term" value="F:DNA binding"/>
    <property type="evidence" value="ECO:0000314"/>
    <property type="project" value="MGI"/>
</dbReference>
<dbReference type="GO" id="GO:0001228">
    <property type="term" value="F:DNA-binding transcription activator activity, RNA polymerase II-specific"/>
    <property type="evidence" value="ECO:0007669"/>
    <property type="project" value="Ensembl"/>
</dbReference>
<dbReference type="GO" id="GO:0003700">
    <property type="term" value="F:DNA-binding transcription factor activity"/>
    <property type="evidence" value="ECO:0000314"/>
    <property type="project" value="MGI"/>
</dbReference>
<dbReference type="GO" id="GO:0000981">
    <property type="term" value="F:DNA-binding transcription factor activity, RNA polymerase II-specific"/>
    <property type="evidence" value="ECO:0000314"/>
    <property type="project" value="MGI"/>
</dbReference>
<dbReference type="GO" id="GO:0000978">
    <property type="term" value="F:RNA polymerase II cis-regulatory region sequence-specific DNA binding"/>
    <property type="evidence" value="ECO:0007669"/>
    <property type="project" value="Ensembl"/>
</dbReference>
<dbReference type="GO" id="GO:0043565">
    <property type="term" value="F:sequence-specific DNA binding"/>
    <property type="evidence" value="ECO:0000314"/>
    <property type="project" value="MGI"/>
</dbReference>
<dbReference type="GO" id="GO:0000976">
    <property type="term" value="F:transcription cis-regulatory region binding"/>
    <property type="evidence" value="ECO:0000314"/>
    <property type="project" value="MGI"/>
</dbReference>
<dbReference type="GO" id="GO:0001525">
    <property type="term" value="P:angiogenesis"/>
    <property type="evidence" value="ECO:0000316"/>
    <property type="project" value="MGI"/>
</dbReference>
<dbReference type="GO" id="GO:0001568">
    <property type="term" value="P:blood vessel development"/>
    <property type="evidence" value="ECO:0000315"/>
    <property type="project" value="MGI"/>
</dbReference>
<dbReference type="GO" id="GO:0043534">
    <property type="term" value="P:blood vessel endothelial cell migration"/>
    <property type="evidence" value="ECO:0007669"/>
    <property type="project" value="Ensembl"/>
</dbReference>
<dbReference type="GO" id="GO:0048469">
    <property type="term" value="P:cell maturation"/>
    <property type="evidence" value="ECO:0000314"/>
    <property type="project" value="MGI"/>
</dbReference>
<dbReference type="GO" id="GO:0035050">
    <property type="term" value="P:embryonic heart tube development"/>
    <property type="evidence" value="ECO:0000316"/>
    <property type="project" value="MGI"/>
</dbReference>
<dbReference type="GO" id="GO:0060956">
    <property type="term" value="P:endocardial cell differentiation"/>
    <property type="evidence" value="ECO:0000316"/>
    <property type="project" value="MGI"/>
</dbReference>
<dbReference type="GO" id="GO:0060214">
    <property type="term" value="P:endocardium formation"/>
    <property type="evidence" value="ECO:0000316"/>
    <property type="project" value="MGI"/>
</dbReference>
<dbReference type="GO" id="GO:0061028">
    <property type="term" value="P:establishment of endothelial barrier"/>
    <property type="evidence" value="ECO:0007669"/>
    <property type="project" value="Ensembl"/>
</dbReference>
<dbReference type="GO" id="GO:0001942">
    <property type="term" value="P:hair follicle development"/>
    <property type="evidence" value="ECO:0000315"/>
    <property type="project" value="MGI"/>
</dbReference>
<dbReference type="GO" id="GO:0007507">
    <property type="term" value="P:heart development"/>
    <property type="evidence" value="ECO:0000315"/>
    <property type="project" value="MGI"/>
</dbReference>
<dbReference type="GO" id="GO:0001701">
    <property type="term" value="P:in utero embryonic development"/>
    <property type="evidence" value="ECO:0000315"/>
    <property type="project" value="MGI"/>
</dbReference>
<dbReference type="GO" id="GO:0001945">
    <property type="term" value="P:lymph vessel development"/>
    <property type="evidence" value="ECO:0000315"/>
    <property type="project" value="MGI"/>
</dbReference>
<dbReference type="GO" id="GO:0001946">
    <property type="term" value="P:lymphangiogenesis"/>
    <property type="evidence" value="ECO:0000315"/>
    <property type="project" value="MGI"/>
</dbReference>
<dbReference type="GO" id="GO:0060836">
    <property type="term" value="P:lymphatic endothelial cell differentiation"/>
    <property type="evidence" value="ECO:0000315"/>
    <property type="project" value="MGI"/>
</dbReference>
<dbReference type="GO" id="GO:0045892">
    <property type="term" value="P:negative regulation of DNA-templated transcription"/>
    <property type="evidence" value="ECO:0000314"/>
    <property type="project" value="MGI"/>
</dbReference>
<dbReference type="GO" id="GO:0000122">
    <property type="term" value="P:negative regulation of transcription by RNA polymerase II"/>
    <property type="evidence" value="ECO:0007669"/>
    <property type="project" value="Ensembl"/>
</dbReference>
<dbReference type="GO" id="GO:0045893">
    <property type="term" value="P:positive regulation of DNA-templated transcription"/>
    <property type="evidence" value="ECO:0000314"/>
    <property type="project" value="UniProtKB"/>
</dbReference>
<dbReference type="GO" id="GO:0006355">
    <property type="term" value="P:regulation of DNA-templated transcription"/>
    <property type="evidence" value="ECO:0000314"/>
    <property type="project" value="MGI"/>
</dbReference>
<dbReference type="GO" id="GO:0072091">
    <property type="term" value="P:regulation of stem cell proliferation"/>
    <property type="evidence" value="ECO:0000314"/>
    <property type="project" value="MGI"/>
</dbReference>
<dbReference type="GO" id="GO:0048866">
    <property type="term" value="P:stem cell fate specification"/>
    <property type="evidence" value="ECO:0000314"/>
    <property type="project" value="MGI"/>
</dbReference>
<dbReference type="GO" id="GO:0001944">
    <property type="term" value="P:vasculature development"/>
    <property type="evidence" value="ECO:0000315"/>
    <property type="project" value="MGI"/>
</dbReference>
<dbReference type="GO" id="GO:0001570">
    <property type="term" value="P:vasculogenesis"/>
    <property type="evidence" value="ECO:0000316"/>
    <property type="project" value="MGI"/>
</dbReference>
<dbReference type="CDD" id="cd22048">
    <property type="entry name" value="HMG-box_SoxF_SOX18"/>
    <property type="match status" value="1"/>
</dbReference>
<dbReference type="FunFam" id="1.10.30.10:FF:000008">
    <property type="entry name" value="transcription factor SOX-7"/>
    <property type="match status" value="1"/>
</dbReference>
<dbReference type="Gene3D" id="1.10.30.10">
    <property type="entry name" value="High mobility group box domain"/>
    <property type="match status" value="1"/>
</dbReference>
<dbReference type="InterPro" id="IPR009071">
    <property type="entry name" value="HMG_box_dom"/>
</dbReference>
<dbReference type="InterPro" id="IPR036910">
    <property type="entry name" value="HMG_box_dom_sf"/>
</dbReference>
<dbReference type="InterPro" id="IPR033392">
    <property type="entry name" value="Sox7/17/18_central"/>
</dbReference>
<dbReference type="InterPro" id="IPR021934">
    <property type="entry name" value="Sox_C"/>
</dbReference>
<dbReference type="InterPro" id="IPR050140">
    <property type="entry name" value="SRY-related_HMG-box_TF-like"/>
</dbReference>
<dbReference type="PANTHER" id="PTHR10270">
    <property type="entry name" value="SOX TRANSCRIPTION FACTOR"/>
    <property type="match status" value="1"/>
</dbReference>
<dbReference type="PANTHER" id="PTHR10270:SF204">
    <property type="entry name" value="TRANSCRIPTION FACTOR SOX-18"/>
    <property type="match status" value="1"/>
</dbReference>
<dbReference type="Pfam" id="PF00505">
    <property type="entry name" value="HMG_box"/>
    <property type="match status" value="1"/>
</dbReference>
<dbReference type="Pfam" id="PF12067">
    <property type="entry name" value="Sox17_18_mid"/>
    <property type="match status" value="1"/>
</dbReference>
<dbReference type="SMART" id="SM00398">
    <property type="entry name" value="HMG"/>
    <property type="match status" value="1"/>
</dbReference>
<dbReference type="SUPFAM" id="SSF47095">
    <property type="entry name" value="HMG-box"/>
    <property type="match status" value="1"/>
</dbReference>
<dbReference type="PROSITE" id="PS50118">
    <property type="entry name" value="HMG_BOX_2"/>
    <property type="match status" value="1"/>
</dbReference>
<dbReference type="PROSITE" id="PS51516">
    <property type="entry name" value="SOX_C"/>
    <property type="match status" value="1"/>
</dbReference>
<protein>
    <recommendedName>
        <fullName>Transcription factor SOX-18</fullName>
    </recommendedName>
</protein>
<name>SOX18_MOUSE</name>